<comment type="function">
    <text evidence="1">Catalyzes the condensation of ATP and 5-phosphoribose 1-diphosphate to form N'-(5'-phosphoribosyl)-ATP (PR-ATP). Has a crucial role in the pathway because the rate of histidine biosynthesis seems to be controlled primarily by regulation of HisG enzymatic activity (By similarity).</text>
</comment>
<comment type="catalytic activity">
    <reaction>
        <text>1-(5-phospho-beta-D-ribosyl)-ATP + diphosphate = 5-phospho-alpha-D-ribose 1-diphosphate + ATP</text>
        <dbReference type="Rhea" id="RHEA:18473"/>
        <dbReference type="ChEBI" id="CHEBI:30616"/>
        <dbReference type="ChEBI" id="CHEBI:33019"/>
        <dbReference type="ChEBI" id="CHEBI:58017"/>
        <dbReference type="ChEBI" id="CHEBI:73183"/>
        <dbReference type="EC" id="2.4.2.17"/>
    </reaction>
</comment>
<comment type="pathway">
    <text>Amino-acid biosynthesis; L-histidine biosynthesis; L-histidine from 5-phospho-alpha-D-ribose 1-diphosphate: step 1/9.</text>
</comment>
<comment type="subunit">
    <text evidence="1">Heteromultimer composed of HisG and HisZ subunits.</text>
</comment>
<comment type="subcellular location">
    <subcellularLocation>
        <location evidence="1">Cytoplasm</location>
    </subcellularLocation>
</comment>
<comment type="domain">
    <text>Lacks the C-terminal regulatory region which is replaced by HisZ.</text>
</comment>
<comment type="similarity">
    <text evidence="2">Belongs to the ATP phosphoribosyltransferase family. Short subfamily.</text>
</comment>
<evidence type="ECO:0000250" key="1"/>
<evidence type="ECO:0000305" key="2"/>
<feature type="chain" id="PRO_0000151915" description="ATP phosphoribosyltransferase">
    <location>
        <begin position="1"/>
        <end position="213"/>
    </location>
</feature>
<reference key="1">
    <citation type="journal article" date="2001" name="Science">
        <title>Comparative genomics of Listeria species.</title>
        <authorList>
            <person name="Glaser P."/>
            <person name="Frangeul L."/>
            <person name="Buchrieser C."/>
            <person name="Rusniok C."/>
            <person name="Amend A."/>
            <person name="Baquero F."/>
            <person name="Berche P."/>
            <person name="Bloecker H."/>
            <person name="Brandt P."/>
            <person name="Chakraborty T."/>
            <person name="Charbit A."/>
            <person name="Chetouani F."/>
            <person name="Couve E."/>
            <person name="de Daruvar A."/>
            <person name="Dehoux P."/>
            <person name="Domann E."/>
            <person name="Dominguez-Bernal G."/>
            <person name="Duchaud E."/>
            <person name="Durant L."/>
            <person name="Dussurget O."/>
            <person name="Entian K.-D."/>
            <person name="Fsihi H."/>
            <person name="Garcia-del Portillo F."/>
            <person name="Garrido P."/>
            <person name="Gautier L."/>
            <person name="Goebel W."/>
            <person name="Gomez-Lopez N."/>
            <person name="Hain T."/>
            <person name="Hauf J."/>
            <person name="Jackson D."/>
            <person name="Jones L.-M."/>
            <person name="Kaerst U."/>
            <person name="Kreft J."/>
            <person name="Kuhn M."/>
            <person name="Kunst F."/>
            <person name="Kurapkat G."/>
            <person name="Madueno E."/>
            <person name="Maitournam A."/>
            <person name="Mata Vicente J."/>
            <person name="Ng E."/>
            <person name="Nedjari H."/>
            <person name="Nordsiek G."/>
            <person name="Novella S."/>
            <person name="de Pablos B."/>
            <person name="Perez-Diaz J.-C."/>
            <person name="Purcell R."/>
            <person name="Remmel B."/>
            <person name="Rose M."/>
            <person name="Schlueter T."/>
            <person name="Simoes N."/>
            <person name="Tierrez A."/>
            <person name="Vazquez-Boland J.-A."/>
            <person name="Voss H."/>
            <person name="Wehland J."/>
            <person name="Cossart P."/>
        </authorList>
    </citation>
    <scope>NUCLEOTIDE SEQUENCE [LARGE SCALE GENOMIC DNA]</scope>
    <source>
        <strain>ATCC BAA-680 / CLIP 11262</strain>
    </source>
</reference>
<dbReference type="EC" id="2.4.2.17"/>
<dbReference type="EMBL" id="AL596165">
    <property type="protein sequence ID" value="CAC95809.1"/>
    <property type="molecule type" value="Genomic_DNA"/>
</dbReference>
<dbReference type="PIR" id="AI1504">
    <property type="entry name" value="AI1504"/>
</dbReference>
<dbReference type="RefSeq" id="WP_010990496.1">
    <property type="nucleotide sequence ID" value="NC_003212.1"/>
</dbReference>
<dbReference type="SMR" id="Q92E83"/>
<dbReference type="STRING" id="272626.gene:17564903"/>
<dbReference type="KEGG" id="lin:hisG"/>
<dbReference type="eggNOG" id="COG0040">
    <property type="taxonomic scope" value="Bacteria"/>
</dbReference>
<dbReference type="HOGENOM" id="CLU_038115_2_0_9"/>
<dbReference type="OrthoDB" id="9801867at2"/>
<dbReference type="UniPathway" id="UPA00031">
    <property type="reaction ID" value="UER00006"/>
</dbReference>
<dbReference type="Proteomes" id="UP000002513">
    <property type="component" value="Chromosome"/>
</dbReference>
<dbReference type="GO" id="GO:0005737">
    <property type="term" value="C:cytoplasm"/>
    <property type="evidence" value="ECO:0007669"/>
    <property type="project" value="UniProtKB-SubCell"/>
</dbReference>
<dbReference type="GO" id="GO:0005524">
    <property type="term" value="F:ATP binding"/>
    <property type="evidence" value="ECO:0007669"/>
    <property type="project" value="UniProtKB-KW"/>
</dbReference>
<dbReference type="GO" id="GO:0003879">
    <property type="term" value="F:ATP phosphoribosyltransferase activity"/>
    <property type="evidence" value="ECO:0007669"/>
    <property type="project" value="UniProtKB-UniRule"/>
</dbReference>
<dbReference type="GO" id="GO:0000105">
    <property type="term" value="P:L-histidine biosynthetic process"/>
    <property type="evidence" value="ECO:0007669"/>
    <property type="project" value="UniProtKB-UniRule"/>
</dbReference>
<dbReference type="CDD" id="cd13595">
    <property type="entry name" value="PBP2_HisGs"/>
    <property type="match status" value="1"/>
</dbReference>
<dbReference type="FunFam" id="3.40.190.10:FF:000008">
    <property type="entry name" value="ATP phosphoribosyltransferase"/>
    <property type="match status" value="1"/>
</dbReference>
<dbReference type="FunFam" id="3.40.190.10:FF:000011">
    <property type="entry name" value="ATP phosphoribosyltransferase"/>
    <property type="match status" value="1"/>
</dbReference>
<dbReference type="Gene3D" id="3.40.190.10">
    <property type="entry name" value="Periplasmic binding protein-like II"/>
    <property type="match status" value="2"/>
</dbReference>
<dbReference type="HAMAP" id="MF_01018">
    <property type="entry name" value="HisG_Short"/>
    <property type="match status" value="1"/>
</dbReference>
<dbReference type="InterPro" id="IPR013820">
    <property type="entry name" value="ATP_PRibTrfase_cat"/>
</dbReference>
<dbReference type="InterPro" id="IPR018198">
    <property type="entry name" value="ATP_PRibTrfase_CS"/>
</dbReference>
<dbReference type="InterPro" id="IPR001348">
    <property type="entry name" value="ATP_PRibTrfase_HisG"/>
</dbReference>
<dbReference type="InterPro" id="IPR024893">
    <property type="entry name" value="ATP_PRibTrfase_HisG_short"/>
</dbReference>
<dbReference type="NCBIfam" id="TIGR00070">
    <property type="entry name" value="hisG"/>
    <property type="match status" value="1"/>
</dbReference>
<dbReference type="PANTHER" id="PTHR21403:SF8">
    <property type="entry name" value="ATP PHOSPHORIBOSYLTRANSFERASE"/>
    <property type="match status" value="1"/>
</dbReference>
<dbReference type="PANTHER" id="PTHR21403">
    <property type="entry name" value="ATP PHOSPHORIBOSYLTRANSFERASE ATP-PRTASE"/>
    <property type="match status" value="1"/>
</dbReference>
<dbReference type="Pfam" id="PF01634">
    <property type="entry name" value="HisG"/>
    <property type="match status" value="1"/>
</dbReference>
<dbReference type="SUPFAM" id="SSF53850">
    <property type="entry name" value="Periplasmic binding protein-like II"/>
    <property type="match status" value="1"/>
</dbReference>
<dbReference type="PROSITE" id="PS01316">
    <property type="entry name" value="ATP_P_PHORIBOSYLTR"/>
    <property type="match status" value="1"/>
</dbReference>
<proteinExistence type="inferred from homology"/>
<name>HIS1_LISIN</name>
<protein>
    <recommendedName>
        <fullName>ATP phosphoribosyltransferase</fullName>
        <shortName>ATP-PRT</shortName>
        <shortName>ATP-PRTase</shortName>
        <ecNumber>2.4.2.17</ecNumber>
    </recommendedName>
</protein>
<accession>Q92E83</accession>
<gene>
    <name type="primary">hisG</name>
    <name type="ordered locus">lin0577</name>
</gene>
<organism>
    <name type="scientific">Listeria innocua serovar 6a (strain ATCC BAA-680 / CLIP 11262)</name>
    <dbReference type="NCBI Taxonomy" id="272626"/>
    <lineage>
        <taxon>Bacteria</taxon>
        <taxon>Bacillati</taxon>
        <taxon>Bacillota</taxon>
        <taxon>Bacilli</taxon>
        <taxon>Bacillales</taxon>
        <taxon>Listeriaceae</taxon>
        <taxon>Listeria</taxon>
    </lineage>
</organism>
<sequence>MKALKIALTKGRLEKDAVALLEKAGIDCSSMNDKKRKLIFHSSTQPISFILVKAVDVMTYVKHGVADIGIVGKDVLMEASKSHYEMLDLEIGQCQFCLASTPDFDPSSYRRKIIATKYPAVSSKFFRAKGEDVEIIKIEGSVEIAPVLGLADAIIDIVETGSTLKENGLVIYEKMYPISARLIVNKASLKQNKTQIFQLIDQLEQAIKEEQTR</sequence>
<keyword id="KW-0028">Amino-acid biosynthesis</keyword>
<keyword id="KW-0067">ATP-binding</keyword>
<keyword id="KW-0963">Cytoplasm</keyword>
<keyword id="KW-0328">Glycosyltransferase</keyword>
<keyword id="KW-0368">Histidine biosynthesis</keyword>
<keyword id="KW-0547">Nucleotide-binding</keyword>
<keyword id="KW-0808">Transferase</keyword>